<name>SPA2L_BOVIN</name>
<accession>Q0IIA6</accession>
<dbReference type="EMBL" id="BC122735">
    <property type="protein sequence ID" value="AAI22736.1"/>
    <property type="molecule type" value="mRNA"/>
</dbReference>
<dbReference type="RefSeq" id="NP_001069970.1">
    <property type="nucleotide sequence ID" value="NM_001076502.2"/>
</dbReference>
<dbReference type="SMR" id="Q0IIA6"/>
<dbReference type="FunCoup" id="Q0IIA6">
    <property type="interactions" value="114"/>
</dbReference>
<dbReference type="STRING" id="9913.ENSBTAP00000056772"/>
<dbReference type="PaxDb" id="9913-ENSBTAP00000044617"/>
<dbReference type="GeneID" id="618368"/>
<dbReference type="KEGG" id="bta:618368"/>
<dbReference type="CTD" id="124044"/>
<dbReference type="VEuPathDB" id="HostDB:ENSBTAG00000033334"/>
<dbReference type="eggNOG" id="ENOG502S1TH">
    <property type="taxonomic scope" value="Eukaryota"/>
</dbReference>
<dbReference type="HOGENOM" id="CLU_047839_0_0_1"/>
<dbReference type="InParanoid" id="Q0IIA6"/>
<dbReference type="OMA" id="LPTCRPG"/>
<dbReference type="OrthoDB" id="9837000at2759"/>
<dbReference type="TreeFam" id="TF328840"/>
<dbReference type="Proteomes" id="UP000009136">
    <property type="component" value="Chromosome 18"/>
</dbReference>
<dbReference type="Bgee" id="ENSBTAG00000033334">
    <property type="expression patterns" value="Expressed in floor plate of diencephalon and 102 other cell types or tissues"/>
</dbReference>
<dbReference type="GO" id="GO:0005737">
    <property type="term" value="C:cytoplasm"/>
    <property type="evidence" value="ECO:0000318"/>
    <property type="project" value="GO_Central"/>
</dbReference>
<dbReference type="Gene3D" id="1.20.58.2190">
    <property type="match status" value="1"/>
</dbReference>
<dbReference type="InterPro" id="IPR048839">
    <property type="entry name" value="SPATA2_PUB-like"/>
</dbReference>
<dbReference type="PANTHER" id="PTHR15326:SF7">
    <property type="entry name" value="SPERMATOGENESIS-ASSOCIATED PROTEIN 2-LIKE PROTEIN"/>
    <property type="match status" value="1"/>
</dbReference>
<dbReference type="PANTHER" id="PTHR15326">
    <property type="entry name" value="SPERMATOGENESIS-ASSOCIATED PROTEIN 2/TAMOZHENNIC"/>
    <property type="match status" value="1"/>
</dbReference>
<dbReference type="Pfam" id="PF21388">
    <property type="entry name" value="SPATA2_PUB-like"/>
    <property type="match status" value="1"/>
</dbReference>
<comment type="similarity">
    <text evidence="2">Belongs to the SPATA2 family.</text>
</comment>
<protein>
    <recommendedName>
        <fullName>Spermatogenesis-associated protein 2-like protein</fullName>
        <shortName>SPATA2-like protein</shortName>
    </recommendedName>
</protein>
<reference key="1">
    <citation type="submission" date="2006-08" db="EMBL/GenBank/DDBJ databases">
        <authorList>
            <consortium name="NIH - Mammalian Gene Collection (MGC) project"/>
        </authorList>
    </citation>
    <scope>NUCLEOTIDE SEQUENCE [LARGE SCALE MRNA]</scope>
    <source>
        <strain>Hereford</strain>
        <tissue>Hypothalamus</tissue>
    </source>
</reference>
<evidence type="ECO:0000256" key="1">
    <source>
        <dbReference type="SAM" id="MobiDB-lite"/>
    </source>
</evidence>
<evidence type="ECO:0000305" key="2"/>
<sequence>MGSSSLSEDYRLCLERELRRGRAGVCGDPSLRAVLWHILVEDFDLHGALQDDALALLTDGLWGRADLAPALRGLARAFELLELAAVHLYLLPWRKEFTTIKTFSGGYVHVLKGALSEDLLIQSFQKMGYVRRDAHRLMVAALPPARQLVQVALGCFALRLECEILGEVLAQLGTSVLPAEELLQARRASVDVASCVAWLQQRLAREEEPPPLPRRGSPTGCQARLDLYRDVQEDEGSDEASLYGGPSPGPDSPTSELACQPRFWEQSARLWGAGGGPWEPAEVSSPTSGASEEEEPQPEAFSFLSLRRELLSRPGDLAPPHAPRSPEQASPPPIPEPPGYQMHTCLAPGALPALCCDTCRQLHAAHCAALPSCHPGHSLRTLRGNSQRRLWLQRAQVDALLYDSPAAGP</sequence>
<proteinExistence type="evidence at transcript level"/>
<gene>
    <name type="primary">SPATA2L</name>
</gene>
<feature type="chain" id="PRO_0000297669" description="Spermatogenesis-associated protein 2-like protein">
    <location>
        <begin position="1"/>
        <end position="409"/>
    </location>
</feature>
<feature type="region of interest" description="Disordered" evidence="1">
    <location>
        <begin position="233"/>
        <end position="257"/>
    </location>
</feature>
<feature type="region of interest" description="Disordered" evidence="1">
    <location>
        <begin position="270"/>
        <end position="299"/>
    </location>
</feature>
<feature type="region of interest" description="Disordered" evidence="1">
    <location>
        <begin position="313"/>
        <end position="337"/>
    </location>
</feature>
<keyword id="KW-1185">Reference proteome</keyword>
<organism>
    <name type="scientific">Bos taurus</name>
    <name type="common">Bovine</name>
    <dbReference type="NCBI Taxonomy" id="9913"/>
    <lineage>
        <taxon>Eukaryota</taxon>
        <taxon>Metazoa</taxon>
        <taxon>Chordata</taxon>
        <taxon>Craniata</taxon>
        <taxon>Vertebrata</taxon>
        <taxon>Euteleostomi</taxon>
        <taxon>Mammalia</taxon>
        <taxon>Eutheria</taxon>
        <taxon>Laurasiatheria</taxon>
        <taxon>Artiodactyla</taxon>
        <taxon>Ruminantia</taxon>
        <taxon>Pecora</taxon>
        <taxon>Bovidae</taxon>
        <taxon>Bovinae</taxon>
        <taxon>Bos</taxon>
    </lineage>
</organism>